<proteinExistence type="inferred from homology"/>
<evidence type="ECO:0000255" key="1">
    <source>
        <dbReference type="HAMAP-Rule" id="MF_00072"/>
    </source>
</evidence>
<gene>
    <name evidence="1" type="primary">prfC</name>
    <name type="ordered locus">SFV_4409</name>
</gene>
<accession>Q0SX36</accession>
<organism>
    <name type="scientific">Shigella flexneri serotype 5b (strain 8401)</name>
    <dbReference type="NCBI Taxonomy" id="373384"/>
    <lineage>
        <taxon>Bacteria</taxon>
        <taxon>Pseudomonadati</taxon>
        <taxon>Pseudomonadota</taxon>
        <taxon>Gammaproteobacteria</taxon>
        <taxon>Enterobacterales</taxon>
        <taxon>Enterobacteriaceae</taxon>
        <taxon>Shigella</taxon>
    </lineage>
</organism>
<feature type="chain" id="PRO_1000023682" description="Peptide chain release factor 3">
    <location>
        <begin position="1"/>
        <end position="529"/>
    </location>
</feature>
<feature type="domain" description="tr-type G">
    <location>
        <begin position="11"/>
        <end position="280"/>
    </location>
</feature>
<feature type="binding site" evidence="1">
    <location>
        <begin position="20"/>
        <end position="27"/>
    </location>
    <ligand>
        <name>GTP</name>
        <dbReference type="ChEBI" id="CHEBI:37565"/>
    </ligand>
</feature>
<feature type="binding site" evidence="1">
    <location>
        <begin position="88"/>
        <end position="92"/>
    </location>
    <ligand>
        <name>GTP</name>
        <dbReference type="ChEBI" id="CHEBI:37565"/>
    </ligand>
</feature>
<feature type="binding site" evidence="1">
    <location>
        <begin position="142"/>
        <end position="145"/>
    </location>
    <ligand>
        <name>GTP</name>
        <dbReference type="ChEBI" id="CHEBI:37565"/>
    </ligand>
</feature>
<reference key="1">
    <citation type="journal article" date="2006" name="BMC Genomics">
        <title>Complete genome sequence of Shigella flexneri 5b and comparison with Shigella flexneri 2a.</title>
        <authorList>
            <person name="Nie H."/>
            <person name="Yang F."/>
            <person name="Zhang X."/>
            <person name="Yang J."/>
            <person name="Chen L."/>
            <person name="Wang J."/>
            <person name="Xiong Z."/>
            <person name="Peng J."/>
            <person name="Sun L."/>
            <person name="Dong J."/>
            <person name="Xue Y."/>
            <person name="Xu X."/>
            <person name="Chen S."/>
            <person name="Yao Z."/>
            <person name="Shen Y."/>
            <person name="Jin Q."/>
        </authorList>
    </citation>
    <scope>NUCLEOTIDE SEQUENCE [LARGE SCALE GENOMIC DNA]</scope>
    <source>
        <strain>8401</strain>
    </source>
</reference>
<dbReference type="EMBL" id="CP000266">
    <property type="protein sequence ID" value="ABF06379.1"/>
    <property type="molecule type" value="Genomic_DNA"/>
</dbReference>
<dbReference type="RefSeq" id="WP_000175933.1">
    <property type="nucleotide sequence ID" value="NC_008258.1"/>
</dbReference>
<dbReference type="SMR" id="Q0SX36"/>
<dbReference type="KEGG" id="sfv:SFV_4409"/>
<dbReference type="HOGENOM" id="CLU_002794_2_1_6"/>
<dbReference type="Proteomes" id="UP000000659">
    <property type="component" value="Chromosome"/>
</dbReference>
<dbReference type="GO" id="GO:0005829">
    <property type="term" value="C:cytosol"/>
    <property type="evidence" value="ECO:0007669"/>
    <property type="project" value="TreeGrafter"/>
</dbReference>
<dbReference type="GO" id="GO:0005525">
    <property type="term" value="F:GTP binding"/>
    <property type="evidence" value="ECO:0007669"/>
    <property type="project" value="UniProtKB-UniRule"/>
</dbReference>
<dbReference type="GO" id="GO:0003924">
    <property type="term" value="F:GTPase activity"/>
    <property type="evidence" value="ECO:0007669"/>
    <property type="project" value="InterPro"/>
</dbReference>
<dbReference type="GO" id="GO:0097216">
    <property type="term" value="F:guanosine tetraphosphate binding"/>
    <property type="evidence" value="ECO:0007669"/>
    <property type="project" value="UniProtKB-ARBA"/>
</dbReference>
<dbReference type="GO" id="GO:0016150">
    <property type="term" value="F:translation release factor activity, codon nonspecific"/>
    <property type="evidence" value="ECO:0007669"/>
    <property type="project" value="TreeGrafter"/>
</dbReference>
<dbReference type="GO" id="GO:0016149">
    <property type="term" value="F:translation release factor activity, codon specific"/>
    <property type="evidence" value="ECO:0007669"/>
    <property type="project" value="UniProtKB-UniRule"/>
</dbReference>
<dbReference type="GO" id="GO:0006449">
    <property type="term" value="P:regulation of translational termination"/>
    <property type="evidence" value="ECO:0007669"/>
    <property type="project" value="UniProtKB-UniRule"/>
</dbReference>
<dbReference type="CDD" id="cd04169">
    <property type="entry name" value="RF3"/>
    <property type="match status" value="1"/>
</dbReference>
<dbReference type="CDD" id="cd03689">
    <property type="entry name" value="RF3_II"/>
    <property type="match status" value="1"/>
</dbReference>
<dbReference type="CDD" id="cd16259">
    <property type="entry name" value="RF3_III"/>
    <property type="match status" value="1"/>
</dbReference>
<dbReference type="FunFam" id="2.40.30.10:FF:000040">
    <property type="entry name" value="Peptide chain release factor 3"/>
    <property type="match status" value="1"/>
</dbReference>
<dbReference type="FunFam" id="3.30.70.3280:FF:000001">
    <property type="entry name" value="Peptide chain release factor 3"/>
    <property type="match status" value="1"/>
</dbReference>
<dbReference type="FunFam" id="3.40.50.300:FF:000184">
    <property type="entry name" value="Peptide chain release factor 3"/>
    <property type="match status" value="1"/>
</dbReference>
<dbReference type="FunFam" id="3.40.50.300:FF:000253">
    <property type="entry name" value="Peptide chain release factor 3"/>
    <property type="match status" value="1"/>
</dbReference>
<dbReference type="Gene3D" id="3.40.50.300">
    <property type="entry name" value="P-loop containing nucleotide triphosphate hydrolases"/>
    <property type="match status" value="3"/>
</dbReference>
<dbReference type="Gene3D" id="3.30.70.3280">
    <property type="entry name" value="Peptide chain release factor 3, domain III"/>
    <property type="match status" value="1"/>
</dbReference>
<dbReference type="HAMAP" id="MF_00072">
    <property type="entry name" value="Rel_fac_3"/>
    <property type="match status" value="1"/>
</dbReference>
<dbReference type="InterPro" id="IPR053905">
    <property type="entry name" value="EF-G-like_DII"/>
</dbReference>
<dbReference type="InterPro" id="IPR035647">
    <property type="entry name" value="EFG_III/V"/>
</dbReference>
<dbReference type="InterPro" id="IPR031157">
    <property type="entry name" value="G_TR_CS"/>
</dbReference>
<dbReference type="InterPro" id="IPR027417">
    <property type="entry name" value="P-loop_NTPase"/>
</dbReference>
<dbReference type="InterPro" id="IPR004548">
    <property type="entry name" value="PrfC"/>
</dbReference>
<dbReference type="InterPro" id="IPR032090">
    <property type="entry name" value="RF3_C"/>
</dbReference>
<dbReference type="InterPro" id="IPR038467">
    <property type="entry name" value="RF3_dom_3_sf"/>
</dbReference>
<dbReference type="InterPro" id="IPR041732">
    <property type="entry name" value="RF3_GTP-bd"/>
</dbReference>
<dbReference type="InterPro" id="IPR005225">
    <property type="entry name" value="Small_GTP-bd"/>
</dbReference>
<dbReference type="InterPro" id="IPR000795">
    <property type="entry name" value="T_Tr_GTP-bd_dom"/>
</dbReference>
<dbReference type="InterPro" id="IPR009000">
    <property type="entry name" value="Transl_B-barrel_sf"/>
</dbReference>
<dbReference type="NCBIfam" id="TIGR00503">
    <property type="entry name" value="prfC"/>
    <property type="match status" value="1"/>
</dbReference>
<dbReference type="NCBIfam" id="NF001964">
    <property type="entry name" value="PRK00741.1"/>
    <property type="match status" value="1"/>
</dbReference>
<dbReference type="NCBIfam" id="TIGR00231">
    <property type="entry name" value="small_GTP"/>
    <property type="match status" value="1"/>
</dbReference>
<dbReference type="PANTHER" id="PTHR43556">
    <property type="entry name" value="PEPTIDE CHAIN RELEASE FACTOR RF3"/>
    <property type="match status" value="1"/>
</dbReference>
<dbReference type="PANTHER" id="PTHR43556:SF2">
    <property type="entry name" value="PEPTIDE CHAIN RELEASE FACTOR RF3"/>
    <property type="match status" value="1"/>
</dbReference>
<dbReference type="Pfam" id="PF22042">
    <property type="entry name" value="EF-G_D2"/>
    <property type="match status" value="1"/>
</dbReference>
<dbReference type="Pfam" id="PF00009">
    <property type="entry name" value="GTP_EFTU"/>
    <property type="match status" value="1"/>
</dbReference>
<dbReference type="Pfam" id="PF16658">
    <property type="entry name" value="RF3_C"/>
    <property type="match status" value="1"/>
</dbReference>
<dbReference type="PRINTS" id="PR00315">
    <property type="entry name" value="ELONGATNFCT"/>
</dbReference>
<dbReference type="SUPFAM" id="SSF54980">
    <property type="entry name" value="EF-G C-terminal domain-like"/>
    <property type="match status" value="1"/>
</dbReference>
<dbReference type="SUPFAM" id="SSF52540">
    <property type="entry name" value="P-loop containing nucleoside triphosphate hydrolases"/>
    <property type="match status" value="1"/>
</dbReference>
<dbReference type="SUPFAM" id="SSF50447">
    <property type="entry name" value="Translation proteins"/>
    <property type="match status" value="1"/>
</dbReference>
<dbReference type="PROSITE" id="PS00301">
    <property type="entry name" value="G_TR_1"/>
    <property type="match status" value="1"/>
</dbReference>
<dbReference type="PROSITE" id="PS51722">
    <property type="entry name" value="G_TR_2"/>
    <property type="match status" value="1"/>
</dbReference>
<sequence length="529" mass="59559">MTLSPYLKEVAKRRTFAIISHPDAGKTTITEKVLLFGQAIQTAGTVKGRGSNQHAKSDWMEMEKQRGISITTSVMQFPYHDCLVNLLDTPGHEDFSEDTYRTLTAVDCCLMVIDAAKGVEDRTRKLMEVTRLRDTPILTFMNKLDRDIRDPMELLDEVENELKIGCAPITWPIGCGKLFKGVYHLYKDETYLYQSGKGHTIQEVRIVKGLNNPDLDAAVGEDLAQQLRDELELVKGGSNEFDKELFLAGEITPVFFGTALGNFGVDHMLNGLVEWAPAPMPRQTDTRTVEASEDKFTGFVFKIQANMDPKHRDRVAFMRVVSGKYEKGMKLRQVRTAKDVVISDALTFMAGDRSHVEEAYPGDILGLHNHGTIQIGDTFTQGEMMKFTGIPNFAPELFRRIRLKDPLKQKQLLKGLVQLSEEGAVQVFRPISNNDLIVGAVGVLQFDVVVARLKSEYNVEAVYESVNVATARWVECADAKKFEEFKRKNESQLALDGGDNLAYIATSMVNLRLAQERYPDVQFHQTREH</sequence>
<comment type="function">
    <text evidence="1">Increases the formation of ribosomal termination complexes and stimulates activities of RF-1 and RF-2. It binds guanine nucleotides and has strong preference for UGA stop codons. It may interact directly with the ribosome. The stimulation of RF-1 and RF-2 is significantly reduced by GTP and GDP, but not by GMP.</text>
</comment>
<comment type="subcellular location">
    <subcellularLocation>
        <location evidence="1">Cytoplasm</location>
    </subcellularLocation>
</comment>
<comment type="similarity">
    <text evidence="1">Belongs to the TRAFAC class translation factor GTPase superfamily. Classic translation factor GTPase family. PrfC subfamily.</text>
</comment>
<protein>
    <recommendedName>
        <fullName evidence="1">Peptide chain release factor 3</fullName>
        <shortName evidence="1">RF-3</shortName>
    </recommendedName>
</protein>
<name>RF3_SHIF8</name>
<keyword id="KW-0963">Cytoplasm</keyword>
<keyword id="KW-0342">GTP-binding</keyword>
<keyword id="KW-0547">Nucleotide-binding</keyword>
<keyword id="KW-0648">Protein biosynthesis</keyword>